<reference key="1">
    <citation type="journal article" date="2006" name="Proc. Natl. Acad. Sci. U.S.A.">
        <title>Genome sequence of Synechococcus CC9311: insights into adaptation to a coastal environment.</title>
        <authorList>
            <person name="Palenik B."/>
            <person name="Ren Q."/>
            <person name="Dupont C.L."/>
            <person name="Myers G.S."/>
            <person name="Heidelberg J.F."/>
            <person name="Badger J.H."/>
            <person name="Madupu R."/>
            <person name="Nelson W.C."/>
            <person name="Brinkac L.M."/>
            <person name="Dodson R.J."/>
            <person name="Durkin A.S."/>
            <person name="Daugherty S.C."/>
            <person name="Sullivan S.A."/>
            <person name="Khouri H."/>
            <person name="Mohamoud Y."/>
            <person name="Halpin R."/>
            <person name="Paulsen I.T."/>
        </authorList>
    </citation>
    <scope>NUCLEOTIDE SEQUENCE [LARGE SCALE GENOMIC DNA]</scope>
    <source>
        <strain>CC9311</strain>
    </source>
</reference>
<protein>
    <recommendedName>
        <fullName evidence="1">Imidazoleglycerol-phosphate dehydratase</fullName>
        <shortName evidence="1">IGPD</shortName>
        <ecNumber evidence="1">4.2.1.19</ecNumber>
    </recommendedName>
</protein>
<organism>
    <name type="scientific">Synechococcus sp. (strain CC9311)</name>
    <dbReference type="NCBI Taxonomy" id="64471"/>
    <lineage>
        <taxon>Bacteria</taxon>
        <taxon>Bacillati</taxon>
        <taxon>Cyanobacteriota</taxon>
        <taxon>Cyanophyceae</taxon>
        <taxon>Synechococcales</taxon>
        <taxon>Synechococcaceae</taxon>
        <taxon>Synechococcus</taxon>
    </lineage>
</organism>
<keyword id="KW-0028">Amino-acid biosynthesis</keyword>
<keyword id="KW-0963">Cytoplasm</keyword>
<keyword id="KW-0368">Histidine biosynthesis</keyword>
<keyword id="KW-0456">Lyase</keyword>
<keyword id="KW-1185">Reference proteome</keyword>
<feature type="chain" id="PRO_0000336347" description="Imidazoleglycerol-phosphate dehydratase">
    <location>
        <begin position="1"/>
        <end position="201"/>
    </location>
</feature>
<accession>Q0IDH6</accession>
<gene>
    <name evidence="1" type="primary">hisB</name>
    <name type="ordered locus">sync_0260</name>
</gene>
<proteinExistence type="inferred from homology"/>
<comment type="catalytic activity">
    <reaction evidence="1">
        <text>D-erythro-1-(imidazol-4-yl)glycerol 3-phosphate = 3-(imidazol-4-yl)-2-oxopropyl phosphate + H2O</text>
        <dbReference type="Rhea" id="RHEA:11040"/>
        <dbReference type="ChEBI" id="CHEBI:15377"/>
        <dbReference type="ChEBI" id="CHEBI:57766"/>
        <dbReference type="ChEBI" id="CHEBI:58278"/>
        <dbReference type="EC" id="4.2.1.19"/>
    </reaction>
</comment>
<comment type="pathway">
    <text evidence="1">Amino-acid biosynthesis; L-histidine biosynthesis; L-histidine from 5-phospho-alpha-D-ribose 1-diphosphate: step 6/9.</text>
</comment>
<comment type="subcellular location">
    <subcellularLocation>
        <location evidence="1">Cytoplasm</location>
    </subcellularLocation>
</comment>
<comment type="similarity">
    <text evidence="1">Belongs to the imidazoleglycerol-phosphate dehydratase family.</text>
</comment>
<sequence length="201" mass="21760">MRTGEIHRVTGETDVSVRLGLDGSGRCQASTGVPFLDHMLHQISSHGLIDLEITASGDTHIDDHHTNEDVGIAFGQALSKALGDRRGIYRFGHFVAPLDEALVQVVLDCSGRPHISWGLTIPTQKIGTYDTELVKEFFVAVVNNSGLTLHIRQLDGVNSHHIVEACFKAFSRALRMATEIDPRRSGLVPSSKGVLEQAGGS</sequence>
<name>HIS7_SYNS3</name>
<evidence type="ECO:0000255" key="1">
    <source>
        <dbReference type="HAMAP-Rule" id="MF_00076"/>
    </source>
</evidence>
<dbReference type="EC" id="4.2.1.19" evidence="1"/>
<dbReference type="EMBL" id="CP000435">
    <property type="protein sequence ID" value="ABI46270.1"/>
    <property type="molecule type" value="Genomic_DNA"/>
</dbReference>
<dbReference type="RefSeq" id="WP_011618241.1">
    <property type="nucleotide sequence ID" value="NC_008319.1"/>
</dbReference>
<dbReference type="SMR" id="Q0IDH6"/>
<dbReference type="STRING" id="64471.sync_0260"/>
<dbReference type="KEGG" id="syg:sync_0260"/>
<dbReference type="eggNOG" id="COG0131">
    <property type="taxonomic scope" value="Bacteria"/>
</dbReference>
<dbReference type="HOGENOM" id="CLU_044308_3_0_3"/>
<dbReference type="OrthoDB" id="9790411at2"/>
<dbReference type="UniPathway" id="UPA00031">
    <property type="reaction ID" value="UER00011"/>
</dbReference>
<dbReference type="Proteomes" id="UP000001961">
    <property type="component" value="Chromosome"/>
</dbReference>
<dbReference type="GO" id="GO:0005737">
    <property type="term" value="C:cytoplasm"/>
    <property type="evidence" value="ECO:0007669"/>
    <property type="project" value="UniProtKB-SubCell"/>
</dbReference>
<dbReference type="GO" id="GO:0004424">
    <property type="term" value="F:imidazoleglycerol-phosphate dehydratase activity"/>
    <property type="evidence" value="ECO:0007669"/>
    <property type="project" value="UniProtKB-UniRule"/>
</dbReference>
<dbReference type="GO" id="GO:0000105">
    <property type="term" value="P:L-histidine biosynthetic process"/>
    <property type="evidence" value="ECO:0007669"/>
    <property type="project" value="UniProtKB-UniRule"/>
</dbReference>
<dbReference type="CDD" id="cd07914">
    <property type="entry name" value="IGPD"/>
    <property type="match status" value="1"/>
</dbReference>
<dbReference type="FunFam" id="3.30.230.40:FF:000002">
    <property type="entry name" value="Imidazoleglycerol-phosphate dehydratase"/>
    <property type="match status" value="1"/>
</dbReference>
<dbReference type="FunFam" id="3.30.230.40:FF:000003">
    <property type="entry name" value="Imidazoleglycerol-phosphate dehydratase HisB"/>
    <property type="match status" value="1"/>
</dbReference>
<dbReference type="Gene3D" id="3.30.230.40">
    <property type="entry name" value="Imidazole glycerol phosphate dehydratase, domain 1"/>
    <property type="match status" value="2"/>
</dbReference>
<dbReference type="HAMAP" id="MF_00076">
    <property type="entry name" value="HisB"/>
    <property type="match status" value="1"/>
</dbReference>
<dbReference type="InterPro" id="IPR038494">
    <property type="entry name" value="IGPD_sf"/>
</dbReference>
<dbReference type="InterPro" id="IPR000807">
    <property type="entry name" value="ImidazoleglycerolP_deHydtase"/>
</dbReference>
<dbReference type="InterPro" id="IPR020565">
    <property type="entry name" value="ImidazoleglycerP_deHydtase_CS"/>
</dbReference>
<dbReference type="InterPro" id="IPR020568">
    <property type="entry name" value="Ribosomal_Su5_D2-typ_SF"/>
</dbReference>
<dbReference type="NCBIfam" id="NF002108">
    <property type="entry name" value="PRK00951.1-3"/>
    <property type="match status" value="1"/>
</dbReference>
<dbReference type="NCBIfam" id="NF002109">
    <property type="entry name" value="PRK00951.1-5"/>
    <property type="match status" value="1"/>
</dbReference>
<dbReference type="NCBIfam" id="NF002111">
    <property type="entry name" value="PRK00951.2-1"/>
    <property type="match status" value="1"/>
</dbReference>
<dbReference type="NCBIfam" id="NF002114">
    <property type="entry name" value="PRK00951.2-4"/>
    <property type="match status" value="1"/>
</dbReference>
<dbReference type="PANTHER" id="PTHR23133:SF2">
    <property type="entry name" value="IMIDAZOLEGLYCEROL-PHOSPHATE DEHYDRATASE"/>
    <property type="match status" value="1"/>
</dbReference>
<dbReference type="PANTHER" id="PTHR23133">
    <property type="entry name" value="IMIDAZOLEGLYCEROL-PHOSPHATE DEHYDRATASE HIS7"/>
    <property type="match status" value="1"/>
</dbReference>
<dbReference type="Pfam" id="PF00475">
    <property type="entry name" value="IGPD"/>
    <property type="match status" value="1"/>
</dbReference>
<dbReference type="SUPFAM" id="SSF54211">
    <property type="entry name" value="Ribosomal protein S5 domain 2-like"/>
    <property type="match status" value="2"/>
</dbReference>
<dbReference type="PROSITE" id="PS00954">
    <property type="entry name" value="IGP_DEHYDRATASE_1"/>
    <property type="match status" value="1"/>
</dbReference>
<dbReference type="PROSITE" id="PS00955">
    <property type="entry name" value="IGP_DEHYDRATASE_2"/>
    <property type="match status" value="1"/>
</dbReference>